<keyword id="KW-0123">Cardiotoxin</keyword>
<keyword id="KW-0204">Cytolysis</keyword>
<keyword id="KW-0903">Direct protein sequencing</keyword>
<keyword id="KW-1015">Disulfide bond</keyword>
<keyword id="KW-0472">Membrane</keyword>
<keyword id="KW-0964">Secreted</keyword>
<keyword id="KW-0732">Signal</keyword>
<keyword id="KW-1052">Target cell membrane</keyword>
<keyword id="KW-1053">Target membrane</keyword>
<keyword id="KW-0800">Toxin</keyword>
<evidence type="ECO:0000250" key="1">
    <source>
        <dbReference type="UniProtKB" id="P60301"/>
    </source>
</evidence>
<evidence type="ECO:0000250" key="2">
    <source>
        <dbReference type="UniProtKB" id="P60304"/>
    </source>
</evidence>
<evidence type="ECO:0000269" key="3">
    <source>
    </source>
</evidence>
<evidence type="ECO:0000305" key="4"/>
<evidence type="ECO:0000305" key="5">
    <source>
    </source>
</evidence>
<reference key="1">
    <citation type="journal article" date="1998" name="FEBS Lett.">
        <title>Structure and organization of the cardiotoxin genes in Naja naja sputatrix.</title>
        <authorList>
            <person name="Lachumanan R."/>
            <person name="Armugam A."/>
            <person name="Tan C.H."/>
            <person name="Jeyaseelan K."/>
        </authorList>
    </citation>
    <scope>NUCLEOTIDE SEQUENCE [GENOMIC DNA]</scope>
    <source>
        <tissue>Liver</tissue>
    </source>
</reference>
<reference key="2">
    <citation type="journal article" date="1998" name="Biochim. Biophys. Acta">
        <title>Six isoforms of cardiotoxin in malayan spitting cobra (Naja naja sputatrix) venom: cloning and characterization of cDNAs.</title>
        <authorList>
            <person name="Jeyaseelan K."/>
            <person name="Armugam A."/>
            <person name="Lachumanan R."/>
            <person name="Tan C.H."/>
            <person name="Tan N.H."/>
        </authorList>
    </citation>
    <scope>NUCLEOTIDE SEQUENCE [MRNA]</scope>
    <scope>PROTEIN SEQUENCE OF 22-71</scope>
    <scope>SUBCELLULAR LOCATION</scope>
    <source>
        <tissue>Venom</tissue>
        <tissue>Venom gland</tissue>
    </source>
</reference>
<protein>
    <recommendedName>
        <fullName>Cytotoxin 3</fullName>
    </recommendedName>
    <alternativeName>
        <fullName>Cardiotoxin-3</fullName>
        <shortName>CTX-3</shortName>
        <shortName>Ctx3</shortName>
    </alternativeName>
</protein>
<proteinExistence type="evidence at protein level"/>
<name>3SA3_NAJSP</name>
<dbReference type="EMBL" id="AF064096">
    <property type="protein sequence ID" value="AAC61314.1"/>
    <property type="molecule type" value="Genomic_DNA"/>
</dbReference>
<dbReference type="EMBL" id="U86593">
    <property type="protein sequence ID" value="AAC27688.1"/>
    <property type="molecule type" value="mRNA"/>
</dbReference>
<dbReference type="BMRB" id="P60302"/>
<dbReference type="SMR" id="P60302"/>
<dbReference type="GO" id="GO:0005576">
    <property type="term" value="C:extracellular region"/>
    <property type="evidence" value="ECO:0007669"/>
    <property type="project" value="UniProtKB-SubCell"/>
</dbReference>
<dbReference type="GO" id="GO:0016020">
    <property type="term" value="C:membrane"/>
    <property type="evidence" value="ECO:0007669"/>
    <property type="project" value="UniProtKB-KW"/>
</dbReference>
<dbReference type="GO" id="GO:0044218">
    <property type="term" value="C:other organism cell membrane"/>
    <property type="evidence" value="ECO:0007669"/>
    <property type="project" value="UniProtKB-KW"/>
</dbReference>
<dbReference type="GO" id="GO:0090729">
    <property type="term" value="F:toxin activity"/>
    <property type="evidence" value="ECO:0007669"/>
    <property type="project" value="UniProtKB-KW"/>
</dbReference>
<dbReference type="GO" id="GO:0031640">
    <property type="term" value="P:killing of cells of another organism"/>
    <property type="evidence" value="ECO:0007669"/>
    <property type="project" value="UniProtKB-KW"/>
</dbReference>
<dbReference type="CDD" id="cd00206">
    <property type="entry name" value="TFP_snake_toxin"/>
    <property type="match status" value="1"/>
</dbReference>
<dbReference type="FunFam" id="2.10.60.10:FF:000024">
    <property type="entry name" value="Cytotoxin 1"/>
    <property type="match status" value="1"/>
</dbReference>
<dbReference type="Gene3D" id="2.10.60.10">
    <property type="entry name" value="CD59"/>
    <property type="match status" value="1"/>
</dbReference>
<dbReference type="InterPro" id="IPR003572">
    <property type="entry name" value="Cytotoxin_Cobra"/>
</dbReference>
<dbReference type="InterPro" id="IPR003571">
    <property type="entry name" value="Snake_3FTx"/>
</dbReference>
<dbReference type="InterPro" id="IPR045860">
    <property type="entry name" value="Snake_toxin-like_sf"/>
</dbReference>
<dbReference type="InterPro" id="IPR018354">
    <property type="entry name" value="Snake_toxin_con_site"/>
</dbReference>
<dbReference type="InterPro" id="IPR054131">
    <property type="entry name" value="Toxin_cobra-type"/>
</dbReference>
<dbReference type="Pfam" id="PF21947">
    <property type="entry name" value="Toxin_cobra-type"/>
    <property type="match status" value="1"/>
</dbReference>
<dbReference type="PRINTS" id="PR00282">
    <property type="entry name" value="CYTOTOXIN"/>
</dbReference>
<dbReference type="SUPFAM" id="SSF57302">
    <property type="entry name" value="Snake toxin-like"/>
    <property type="match status" value="1"/>
</dbReference>
<dbReference type="PROSITE" id="PS00272">
    <property type="entry name" value="SNAKE_TOXIN"/>
    <property type="match status" value="1"/>
</dbReference>
<organism>
    <name type="scientific">Naja sputatrix</name>
    <name type="common">Malayan spitting cobra</name>
    <name type="synonym">Naja naja sputatrix</name>
    <dbReference type="NCBI Taxonomy" id="33626"/>
    <lineage>
        <taxon>Eukaryota</taxon>
        <taxon>Metazoa</taxon>
        <taxon>Chordata</taxon>
        <taxon>Craniata</taxon>
        <taxon>Vertebrata</taxon>
        <taxon>Euteleostomi</taxon>
        <taxon>Lepidosauria</taxon>
        <taxon>Squamata</taxon>
        <taxon>Bifurcata</taxon>
        <taxon>Unidentata</taxon>
        <taxon>Episquamata</taxon>
        <taxon>Toxicofera</taxon>
        <taxon>Serpentes</taxon>
        <taxon>Colubroidea</taxon>
        <taxon>Elapidae</taxon>
        <taxon>Elapinae</taxon>
        <taxon>Naja</taxon>
    </lineage>
</organism>
<accession>P60302</accession>
<accession>P01444</accession>
<sequence>MKTLLLTLVVVTIVCLDLGYTLKCNKLVPLFYKTCPAGKNLCYKMFMVATPKVPVKRGCIDVCPKSSLLVKYVCCNTDRCN</sequence>
<feature type="signal peptide" evidence="3">
    <location>
        <begin position="1"/>
        <end position="21"/>
    </location>
</feature>
<feature type="chain" id="PRO_0000035397" description="Cytotoxin 3" evidence="5">
    <location>
        <begin position="22"/>
        <end position="81"/>
    </location>
</feature>
<feature type="disulfide bond" evidence="1">
    <location>
        <begin position="24"/>
        <end position="42"/>
    </location>
</feature>
<feature type="disulfide bond" evidence="1">
    <location>
        <begin position="35"/>
        <end position="59"/>
    </location>
</feature>
<feature type="disulfide bond" evidence="1">
    <location>
        <begin position="63"/>
        <end position="74"/>
    </location>
</feature>
<feature type="disulfide bond" evidence="1">
    <location>
        <begin position="75"/>
        <end position="80"/>
    </location>
</feature>
<comment type="function">
    <text evidence="1 2">Shows cytolytic activity on many different cells by forming pore in lipid membranes. In vivo, increases heart rate or kills the animal by cardiac arrest. In addition, it binds to heparin with high affinity, interacts with Kv channel-interacting protein 1 (KCNIP1) in a calcium-independent manner, and binds to integrin alpha-V/beta-3 (ITGAV/ITGB3) with moderate affinity.</text>
</comment>
<comment type="subunit">
    <text evidence="1">Monomer in solution; Homodimer and oligomer in the presence of negatively charged lipids forming a pore with a size ranging between 20 and 30 Angstroms.</text>
</comment>
<comment type="subcellular location">
    <subcellularLocation>
        <location evidence="3">Secreted</location>
    </subcellularLocation>
    <subcellularLocation>
        <location evidence="1">Target cell membrane</location>
    </subcellularLocation>
</comment>
<comment type="tissue specificity">
    <text evidence="4">Expressed by the venom gland.</text>
</comment>
<comment type="miscellaneous">
    <text evidence="4">Is classified as a P-type cytotoxin, since a proline residue stands at position 51 (Pro-31 in standard classification).</text>
</comment>
<comment type="similarity">
    <text evidence="4">Belongs to the three-finger toxin family. Short-chain subfamily. Type IA cytotoxin sub-subfamily.</text>
</comment>